<protein>
    <recommendedName>
        <fullName evidence="1">Urease subunit gamma</fullName>
        <ecNumber evidence="1">3.5.1.5</ecNumber>
    </recommendedName>
    <alternativeName>
        <fullName evidence="1">Urea amidohydrolase subunit gamma</fullName>
    </alternativeName>
</protein>
<organism>
    <name type="scientific">Magnetococcus marinus (strain ATCC BAA-1437 / JCM 17883 / MC-1)</name>
    <dbReference type="NCBI Taxonomy" id="156889"/>
    <lineage>
        <taxon>Bacteria</taxon>
        <taxon>Pseudomonadati</taxon>
        <taxon>Pseudomonadota</taxon>
        <taxon>Alphaproteobacteria</taxon>
        <taxon>Magnetococcales</taxon>
        <taxon>Magnetococcaceae</taxon>
        <taxon>Magnetococcus</taxon>
    </lineage>
</organism>
<proteinExistence type="inferred from homology"/>
<dbReference type="EC" id="3.5.1.5" evidence="1"/>
<dbReference type="EMBL" id="CP000471">
    <property type="protein sequence ID" value="ABK43543.1"/>
    <property type="molecule type" value="Genomic_DNA"/>
</dbReference>
<dbReference type="RefSeq" id="WP_011712700.1">
    <property type="nucleotide sequence ID" value="NC_008576.1"/>
</dbReference>
<dbReference type="SMR" id="A0L6F0"/>
<dbReference type="STRING" id="156889.Mmc1_1025"/>
<dbReference type="KEGG" id="mgm:Mmc1_1025"/>
<dbReference type="eggNOG" id="COG0831">
    <property type="taxonomic scope" value="Bacteria"/>
</dbReference>
<dbReference type="HOGENOM" id="CLU_145825_1_0_5"/>
<dbReference type="OrthoDB" id="9797217at2"/>
<dbReference type="UniPathway" id="UPA00258">
    <property type="reaction ID" value="UER00370"/>
</dbReference>
<dbReference type="Proteomes" id="UP000002586">
    <property type="component" value="Chromosome"/>
</dbReference>
<dbReference type="GO" id="GO:0005737">
    <property type="term" value="C:cytoplasm"/>
    <property type="evidence" value="ECO:0007669"/>
    <property type="project" value="UniProtKB-SubCell"/>
</dbReference>
<dbReference type="GO" id="GO:0016151">
    <property type="term" value="F:nickel cation binding"/>
    <property type="evidence" value="ECO:0007669"/>
    <property type="project" value="InterPro"/>
</dbReference>
<dbReference type="GO" id="GO:0009039">
    <property type="term" value="F:urease activity"/>
    <property type="evidence" value="ECO:0007669"/>
    <property type="project" value="UniProtKB-UniRule"/>
</dbReference>
<dbReference type="GO" id="GO:0043419">
    <property type="term" value="P:urea catabolic process"/>
    <property type="evidence" value="ECO:0007669"/>
    <property type="project" value="UniProtKB-UniRule"/>
</dbReference>
<dbReference type="CDD" id="cd00390">
    <property type="entry name" value="Urease_gamma"/>
    <property type="match status" value="1"/>
</dbReference>
<dbReference type="Gene3D" id="3.30.280.10">
    <property type="entry name" value="Urease, gamma-like subunit"/>
    <property type="match status" value="1"/>
</dbReference>
<dbReference type="HAMAP" id="MF_00739">
    <property type="entry name" value="Urease_gamma"/>
    <property type="match status" value="1"/>
</dbReference>
<dbReference type="InterPro" id="IPR012010">
    <property type="entry name" value="Urease_gamma"/>
</dbReference>
<dbReference type="InterPro" id="IPR002026">
    <property type="entry name" value="Urease_gamma/gamma-beta_su"/>
</dbReference>
<dbReference type="InterPro" id="IPR036463">
    <property type="entry name" value="Urease_gamma_sf"/>
</dbReference>
<dbReference type="InterPro" id="IPR050069">
    <property type="entry name" value="Urease_subunit"/>
</dbReference>
<dbReference type="NCBIfam" id="NF009712">
    <property type="entry name" value="PRK13241.1"/>
    <property type="match status" value="1"/>
</dbReference>
<dbReference type="NCBIfam" id="TIGR00193">
    <property type="entry name" value="urease_gam"/>
    <property type="match status" value="1"/>
</dbReference>
<dbReference type="PANTHER" id="PTHR33569">
    <property type="entry name" value="UREASE"/>
    <property type="match status" value="1"/>
</dbReference>
<dbReference type="PANTHER" id="PTHR33569:SF1">
    <property type="entry name" value="UREASE"/>
    <property type="match status" value="1"/>
</dbReference>
<dbReference type="Pfam" id="PF00547">
    <property type="entry name" value="Urease_gamma"/>
    <property type="match status" value="1"/>
</dbReference>
<dbReference type="PIRSF" id="PIRSF001223">
    <property type="entry name" value="Urease_gamma"/>
    <property type="match status" value="1"/>
</dbReference>
<dbReference type="SUPFAM" id="SSF54111">
    <property type="entry name" value="Urease, gamma-subunit"/>
    <property type="match status" value="1"/>
</dbReference>
<gene>
    <name evidence="1" type="primary">ureA</name>
    <name type="ordered locus">Mmc1_1025</name>
</gene>
<feature type="chain" id="PRO_1000046332" description="Urease subunit gamma">
    <location>
        <begin position="1"/>
        <end position="100"/>
    </location>
</feature>
<name>URE3_MAGMM</name>
<comment type="catalytic activity">
    <reaction evidence="1">
        <text>urea + 2 H2O + H(+) = hydrogencarbonate + 2 NH4(+)</text>
        <dbReference type="Rhea" id="RHEA:20557"/>
        <dbReference type="ChEBI" id="CHEBI:15377"/>
        <dbReference type="ChEBI" id="CHEBI:15378"/>
        <dbReference type="ChEBI" id="CHEBI:16199"/>
        <dbReference type="ChEBI" id="CHEBI:17544"/>
        <dbReference type="ChEBI" id="CHEBI:28938"/>
        <dbReference type="EC" id="3.5.1.5"/>
    </reaction>
</comment>
<comment type="pathway">
    <text evidence="1">Nitrogen metabolism; urea degradation; CO(2) and NH(3) from urea (urease route): step 1/1.</text>
</comment>
<comment type="subunit">
    <text evidence="1">Heterotrimer of UreA (gamma), UreB (beta) and UreC (alpha) subunits. Three heterotrimers associate to form the active enzyme.</text>
</comment>
<comment type="subcellular location">
    <subcellularLocation>
        <location evidence="1">Cytoplasm</location>
    </subcellularLocation>
</comment>
<comment type="similarity">
    <text evidence="1">Belongs to the urease gamma subunit family.</text>
</comment>
<sequence>MHLSPREKDKLLVAMAAMVARRRLERGVKLNYPESIALISDYVVEGARDGRSVAELMQAGATVLRREQVMEGIAEMIHEIQVEATFPDGTKLVTVHNPIR</sequence>
<accession>A0L6F0</accession>
<evidence type="ECO:0000255" key="1">
    <source>
        <dbReference type="HAMAP-Rule" id="MF_00739"/>
    </source>
</evidence>
<keyword id="KW-0963">Cytoplasm</keyword>
<keyword id="KW-0378">Hydrolase</keyword>
<keyword id="KW-1185">Reference proteome</keyword>
<reference key="1">
    <citation type="journal article" date="2009" name="Appl. Environ. Microbiol.">
        <title>Complete genome sequence of the chemolithoautotrophic marine magnetotactic coccus strain MC-1.</title>
        <authorList>
            <person name="Schubbe S."/>
            <person name="Williams T.J."/>
            <person name="Xie G."/>
            <person name="Kiss H.E."/>
            <person name="Brettin T.S."/>
            <person name="Martinez D."/>
            <person name="Ross C.A."/>
            <person name="Schuler D."/>
            <person name="Cox B.L."/>
            <person name="Nealson K.H."/>
            <person name="Bazylinski D.A."/>
        </authorList>
    </citation>
    <scope>NUCLEOTIDE SEQUENCE [LARGE SCALE GENOMIC DNA]</scope>
    <source>
        <strain>ATCC BAA-1437 / JCM 17883 / MC-1</strain>
    </source>
</reference>